<gene>
    <name evidence="1" type="primary">nrdR</name>
    <name type="ordered locus">EF_0881</name>
</gene>
<accession>Q837G1</accession>
<sequence>MRCPRCHHNNSRVIDSRQADDGRAIRRRRECENCSYRFTTFERIEAAPLLVIKKNGDREEFNRDKILRGLIRSAEKRPVAMEQMVQIVDNVENRVRSLGENEVSTTLIGEYVMEDLVNLDEIAYIRFASVYRQFKDMSVFLKELQDIVDKAKSSSPDSEN</sequence>
<dbReference type="EMBL" id="AE016830">
    <property type="protein sequence ID" value="AAO80690.1"/>
    <property type="molecule type" value="Genomic_DNA"/>
</dbReference>
<dbReference type="RefSeq" id="NP_814620.1">
    <property type="nucleotide sequence ID" value="NC_004668.1"/>
</dbReference>
<dbReference type="RefSeq" id="WP_002381296.1">
    <property type="nucleotide sequence ID" value="NZ_KE136527.1"/>
</dbReference>
<dbReference type="SMR" id="Q837G1"/>
<dbReference type="STRING" id="226185.EF_0881"/>
<dbReference type="EnsemblBacteria" id="AAO80690">
    <property type="protein sequence ID" value="AAO80690"/>
    <property type="gene ID" value="EF_0881"/>
</dbReference>
<dbReference type="GeneID" id="60893220"/>
<dbReference type="KEGG" id="efa:EF0881"/>
<dbReference type="PATRIC" id="fig|226185.45.peg.3090"/>
<dbReference type="eggNOG" id="COG1327">
    <property type="taxonomic scope" value="Bacteria"/>
</dbReference>
<dbReference type="HOGENOM" id="CLU_108412_0_0_9"/>
<dbReference type="Proteomes" id="UP000001415">
    <property type="component" value="Chromosome"/>
</dbReference>
<dbReference type="GO" id="GO:0005524">
    <property type="term" value="F:ATP binding"/>
    <property type="evidence" value="ECO:0007669"/>
    <property type="project" value="UniProtKB-KW"/>
</dbReference>
<dbReference type="GO" id="GO:0003677">
    <property type="term" value="F:DNA binding"/>
    <property type="evidence" value="ECO:0007669"/>
    <property type="project" value="UniProtKB-KW"/>
</dbReference>
<dbReference type="GO" id="GO:0008270">
    <property type="term" value="F:zinc ion binding"/>
    <property type="evidence" value="ECO:0007669"/>
    <property type="project" value="UniProtKB-UniRule"/>
</dbReference>
<dbReference type="GO" id="GO:0045892">
    <property type="term" value="P:negative regulation of DNA-templated transcription"/>
    <property type="evidence" value="ECO:0007669"/>
    <property type="project" value="UniProtKB-UniRule"/>
</dbReference>
<dbReference type="HAMAP" id="MF_00440">
    <property type="entry name" value="NrdR"/>
    <property type="match status" value="1"/>
</dbReference>
<dbReference type="InterPro" id="IPR005144">
    <property type="entry name" value="ATP-cone_dom"/>
</dbReference>
<dbReference type="InterPro" id="IPR055173">
    <property type="entry name" value="NrdR-like_N"/>
</dbReference>
<dbReference type="InterPro" id="IPR003796">
    <property type="entry name" value="RNR_NrdR-like"/>
</dbReference>
<dbReference type="NCBIfam" id="TIGR00244">
    <property type="entry name" value="transcriptional regulator NrdR"/>
    <property type="match status" value="1"/>
</dbReference>
<dbReference type="PANTHER" id="PTHR30455">
    <property type="entry name" value="TRANSCRIPTIONAL REPRESSOR NRDR"/>
    <property type="match status" value="1"/>
</dbReference>
<dbReference type="PANTHER" id="PTHR30455:SF2">
    <property type="entry name" value="TRANSCRIPTIONAL REPRESSOR NRDR"/>
    <property type="match status" value="1"/>
</dbReference>
<dbReference type="Pfam" id="PF03477">
    <property type="entry name" value="ATP-cone"/>
    <property type="match status" value="1"/>
</dbReference>
<dbReference type="Pfam" id="PF22811">
    <property type="entry name" value="Zn_ribbon_NrdR"/>
    <property type="match status" value="1"/>
</dbReference>
<dbReference type="PROSITE" id="PS51161">
    <property type="entry name" value="ATP_CONE"/>
    <property type="match status" value="1"/>
</dbReference>
<keyword id="KW-0067">ATP-binding</keyword>
<keyword id="KW-0238">DNA-binding</keyword>
<keyword id="KW-0479">Metal-binding</keyword>
<keyword id="KW-0547">Nucleotide-binding</keyword>
<keyword id="KW-1185">Reference proteome</keyword>
<keyword id="KW-0678">Repressor</keyword>
<keyword id="KW-0804">Transcription</keyword>
<keyword id="KW-0805">Transcription regulation</keyword>
<keyword id="KW-0862">Zinc</keyword>
<keyword id="KW-0863">Zinc-finger</keyword>
<feature type="chain" id="PRO_0000182294" description="Transcriptional repressor NrdR">
    <location>
        <begin position="1"/>
        <end position="160"/>
    </location>
</feature>
<feature type="domain" description="ATP-cone" evidence="1">
    <location>
        <begin position="49"/>
        <end position="139"/>
    </location>
</feature>
<feature type="zinc finger region" evidence="1">
    <location>
        <begin position="3"/>
        <end position="34"/>
    </location>
</feature>
<evidence type="ECO:0000255" key="1">
    <source>
        <dbReference type="HAMAP-Rule" id="MF_00440"/>
    </source>
</evidence>
<organism>
    <name type="scientific">Enterococcus faecalis (strain ATCC 700802 / V583)</name>
    <dbReference type="NCBI Taxonomy" id="226185"/>
    <lineage>
        <taxon>Bacteria</taxon>
        <taxon>Bacillati</taxon>
        <taxon>Bacillota</taxon>
        <taxon>Bacilli</taxon>
        <taxon>Lactobacillales</taxon>
        <taxon>Enterococcaceae</taxon>
        <taxon>Enterococcus</taxon>
    </lineage>
</organism>
<name>NRDR_ENTFA</name>
<proteinExistence type="inferred from homology"/>
<protein>
    <recommendedName>
        <fullName evidence="1">Transcriptional repressor NrdR</fullName>
    </recommendedName>
</protein>
<reference key="1">
    <citation type="journal article" date="2003" name="Science">
        <title>Role of mobile DNA in the evolution of vancomycin-resistant Enterococcus faecalis.</title>
        <authorList>
            <person name="Paulsen I.T."/>
            <person name="Banerjei L."/>
            <person name="Myers G.S.A."/>
            <person name="Nelson K.E."/>
            <person name="Seshadri R."/>
            <person name="Read T.D."/>
            <person name="Fouts D.E."/>
            <person name="Eisen J.A."/>
            <person name="Gill S.R."/>
            <person name="Heidelberg J.F."/>
            <person name="Tettelin H."/>
            <person name="Dodson R.J."/>
            <person name="Umayam L.A."/>
            <person name="Brinkac L.M."/>
            <person name="Beanan M.J."/>
            <person name="Daugherty S.C."/>
            <person name="DeBoy R.T."/>
            <person name="Durkin S.A."/>
            <person name="Kolonay J.F."/>
            <person name="Madupu R."/>
            <person name="Nelson W.C."/>
            <person name="Vamathevan J.J."/>
            <person name="Tran B."/>
            <person name="Upton J."/>
            <person name="Hansen T."/>
            <person name="Shetty J."/>
            <person name="Khouri H.M."/>
            <person name="Utterback T.R."/>
            <person name="Radune D."/>
            <person name="Ketchum K.A."/>
            <person name="Dougherty B.A."/>
            <person name="Fraser C.M."/>
        </authorList>
    </citation>
    <scope>NUCLEOTIDE SEQUENCE [LARGE SCALE GENOMIC DNA]</scope>
    <source>
        <strain>ATCC 700802 / V583</strain>
    </source>
</reference>
<comment type="function">
    <text evidence="1">Negatively regulates transcription of bacterial ribonucleotide reductase nrd genes and operons by binding to NrdR-boxes.</text>
</comment>
<comment type="cofactor">
    <cofactor evidence="1">
        <name>Zn(2+)</name>
        <dbReference type="ChEBI" id="CHEBI:29105"/>
    </cofactor>
    <text evidence="1">Binds 1 zinc ion.</text>
</comment>
<comment type="similarity">
    <text evidence="1">Belongs to the NrdR family.</text>
</comment>